<gene>
    <name evidence="1" type="primary">gcvPB</name>
    <name type="ordered locus">Bcer98_2913</name>
</gene>
<dbReference type="EC" id="1.4.4.2" evidence="1"/>
<dbReference type="EMBL" id="CP000764">
    <property type="protein sequence ID" value="ABS23144.1"/>
    <property type="molecule type" value="Genomic_DNA"/>
</dbReference>
<dbReference type="RefSeq" id="WP_012095372.1">
    <property type="nucleotide sequence ID" value="NC_009674.1"/>
</dbReference>
<dbReference type="SMR" id="A7GSN6"/>
<dbReference type="STRING" id="315749.Bcer98_2913"/>
<dbReference type="GeneID" id="33898165"/>
<dbReference type="KEGG" id="bcy:Bcer98_2913"/>
<dbReference type="eggNOG" id="COG1003">
    <property type="taxonomic scope" value="Bacteria"/>
</dbReference>
<dbReference type="HOGENOM" id="CLU_004620_5_0_9"/>
<dbReference type="OrthoDB" id="9801272at2"/>
<dbReference type="Proteomes" id="UP000002300">
    <property type="component" value="Chromosome"/>
</dbReference>
<dbReference type="GO" id="GO:0005829">
    <property type="term" value="C:cytosol"/>
    <property type="evidence" value="ECO:0007669"/>
    <property type="project" value="TreeGrafter"/>
</dbReference>
<dbReference type="GO" id="GO:0005960">
    <property type="term" value="C:glycine cleavage complex"/>
    <property type="evidence" value="ECO:0007669"/>
    <property type="project" value="TreeGrafter"/>
</dbReference>
<dbReference type="GO" id="GO:0016594">
    <property type="term" value="F:glycine binding"/>
    <property type="evidence" value="ECO:0007669"/>
    <property type="project" value="TreeGrafter"/>
</dbReference>
<dbReference type="GO" id="GO:0004375">
    <property type="term" value="F:glycine dehydrogenase (decarboxylating) activity"/>
    <property type="evidence" value="ECO:0007669"/>
    <property type="project" value="UniProtKB-EC"/>
</dbReference>
<dbReference type="GO" id="GO:0030170">
    <property type="term" value="F:pyridoxal phosphate binding"/>
    <property type="evidence" value="ECO:0007669"/>
    <property type="project" value="TreeGrafter"/>
</dbReference>
<dbReference type="GO" id="GO:0019464">
    <property type="term" value="P:glycine decarboxylation via glycine cleavage system"/>
    <property type="evidence" value="ECO:0007669"/>
    <property type="project" value="UniProtKB-UniRule"/>
</dbReference>
<dbReference type="CDD" id="cd00613">
    <property type="entry name" value="GDC-P"/>
    <property type="match status" value="1"/>
</dbReference>
<dbReference type="FunFam" id="3.40.640.10:FF:000034">
    <property type="entry name" value="Probable glycine dehydrogenase (decarboxylating) subunit 2"/>
    <property type="match status" value="1"/>
</dbReference>
<dbReference type="FunFam" id="3.90.1150.10:FF:000014">
    <property type="entry name" value="Probable glycine dehydrogenase (decarboxylating) subunit 2"/>
    <property type="match status" value="1"/>
</dbReference>
<dbReference type="Gene3D" id="6.20.440.10">
    <property type="match status" value="1"/>
</dbReference>
<dbReference type="Gene3D" id="3.90.1150.10">
    <property type="entry name" value="Aspartate Aminotransferase, domain 1"/>
    <property type="match status" value="1"/>
</dbReference>
<dbReference type="Gene3D" id="3.40.640.10">
    <property type="entry name" value="Type I PLP-dependent aspartate aminotransferase-like (Major domain)"/>
    <property type="match status" value="1"/>
</dbReference>
<dbReference type="HAMAP" id="MF_00713">
    <property type="entry name" value="GcvPB"/>
    <property type="match status" value="1"/>
</dbReference>
<dbReference type="InterPro" id="IPR023012">
    <property type="entry name" value="GcvPB"/>
</dbReference>
<dbReference type="InterPro" id="IPR049316">
    <property type="entry name" value="GDC-P_C"/>
</dbReference>
<dbReference type="InterPro" id="IPR049315">
    <property type="entry name" value="GDC-P_N"/>
</dbReference>
<dbReference type="InterPro" id="IPR020581">
    <property type="entry name" value="GDC_P"/>
</dbReference>
<dbReference type="InterPro" id="IPR015424">
    <property type="entry name" value="PyrdxlP-dep_Trfase"/>
</dbReference>
<dbReference type="InterPro" id="IPR015421">
    <property type="entry name" value="PyrdxlP-dep_Trfase_major"/>
</dbReference>
<dbReference type="InterPro" id="IPR015422">
    <property type="entry name" value="PyrdxlP-dep_Trfase_small"/>
</dbReference>
<dbReference type="NCBIfam" id="NF003346">
    <property type="entry name" value="PRK04366.1"/>
    <property type="match status" value="1"/>
</dbReference>
<dbReference type="PANTHER" id="PTHR11773:SF1">
    <property type="entry name" value="GLYCINE DEHYDROGENASE (DECARBOXYLATING), MITOCHONDRIAL"/>
    <property type="match status" value="1"/>
</dbReference>
<dbReference type="PANTHER" id="PTHR11773">
    <property type="entry name" value="GLYCINE DEHYDROGENASE, DECARBOXYLATING"/>
    <property type="match status" value="1"/>
</dbReference>
<dbReference type="Pfam" id="PF21478">
    <property type="entry name" value="GcvP2_C"/>
    <property type="match status" value="1"/>
</dbReference>
<dbReference type="Pfam" id="PF02347">
    <property type="entry name" value="GDC-P"/>
    <property type="match status" value="1"/>
</dbReference>
<dbReference type="SUPFAM" id="SSF53383">
    <property type="entry name" value="PLP-dependent transferases"/>
    <property type="match status" value="1"/>
</dbReference>
<name>GCSPB_BACCN</name>
<sequence length="491" mass="54867">MKNQDQALIFEMSKEGRVGYSLPQLDVEEVKLEDVFESNYIRAEDAELPEVSELDIMRHYTALSNRNHGVDSGFYPLGSCTMKYNPKINENVARFPGFANIHPLQDEKTVQGAMELMYDLQEHLVEITGMDAVTLQPAAGAHGEWTGLMLIRAYHEANGDHNRTKVIVPDSAHGTNPASATVAGFETITVKSNEHGLVDLEDLKRVVNEETAALMLTNPNTLGLFEENILEMAEIVHNAGGKLYYDGANLNAVLSQARPGDMGFDVVHLNLHKTFTGPHGGGGPGSGPVGVKEDLIPFLPKPILEKTENGYHFNYDRPQAIGRVKPFYGNFGINVRAYTYIRSMGPDGLRAVTENAVLNANYMMRRLAPYYDLPFDRHCKHEFVLSGRCQKKLGVRTLDIAKRLLDFGYHPPTIYFPLNVEECIMIEPTETESKETLDGFIDKMIQIAKEAKENPEIVQEAPHTTVITRLDETMAARKPILRYQKPTPVQV</sequence>
<comment type="function">
    <text evidence="1">The glycine cleavage system catalyzes the degradation of glycine. The P protein binds the alpha-amino group of glycine through its pyridoxal phosphate cofactor; CO(2) is released and the remaining methylamine moiety is then transferred to the lipoamide cofactor of the H protein.</text>
</comment>
<comment type="catalytic activity">
    <reaction evidence="1">
        <text>N(6)-[(R)-lipoyl]-L-lysyl-[glycine-cleavage complex H protein] + glycine + H(+) = N(6)-[(R)-S(8)-aminomethyldihydrolipoyl]-L-lysyl-[glycine-cleavage complex H protein] + CO2</text>
        <dbReference type="Rhea" id="RHEA:24304"/>
        <dbReference type="Rhea" id="RHEA-COMP:10494"/>
        <dbReference type="Rhea" id="RHEA-COMP:10495"/>
        <dbReference type="ChEBI" id="CHEBI:15378"/>
        <dbReference type="ChEBI" id="CHEBI:16526"/>
        <dbReference type="ChEBI" id="CHEBI:57305"/>
        <dbReference type="ChEBI" id="CHEBI:83099"/>
        <dbReference type="ChEBI" id="CHEBI:83143"/>
        <dbReference type="EC" id="1.4.4.2"/>
    </reaction>
</comment>
<comment type="cofactor">
    <cofactor evidence="1">
        <name>pyridoxal 5'-phosphate</name>
        <dbReference type="ChEBI" id="CHEBI:597326"/>
    </cofactor>
</comment>
<comment type="subunit">
    <text evidence="1">The glycine cleavage system is composed of four proteins: P, T, L and H. In this organism, the P 'protein' is a heterodimer of two subunits.</text>
</comment>
<comment type="similarity">
    <text evidence="1">Belongs to the GcvP family. C-terminal subunit subfamily.</text>
</comment>
<protein>
    <recommendedName>
        <fullName evidence="1">Probable glycine dehydrogenase (decarboxylating) subunit 2</fullName>
        <ecNumber evidence="1">1.4.4.2</ecNumber>
    </recommendedName>
    <alternativeName>
        <fullName evidence="1">Glycine cleavage system P-protein subunit 2</fullName>
    </alternativeName>
    <alternativeName>
        <fullName evidence="1">Glycine decarboxylase subunit 2</fullName>
    </alternativeName>
    <alternativeName>
        <fullName evidence="1">Glycine dehydrogenase (aminomethyl-transferring) subunit 2</fullName>
    </alternativeName>
</protein>
<reference key="1">
    <citation type="journal article" date="2008" name="Chem. Biol. Interact.">
        <title>Extending the Bacillus cereus group genomics to putative food-borne pathogens of different toxicity.</title>
        <authorList>
            <person name="Lapidus A."/>
            <person name="Goltsman E."/>
            <person name="Auger S."/>
            <person name="Galleron N."/>
            <person name="Segurens B."/>
            <person name="Dossat C."/>
            <person name="Land M.L."/>
            <person name="Broussolle V."/>
            <person name="Brillard J."/>
            <person name="Guinebretiere M.-H."/>
            <person name="Sanchis V."/>
            <person name="Nguen-the C."/>
            <person name="Lereclus D."/>
            <person name="Richardson P."/>
            <person name="Wincker P."/>
            <person name="Weissenbach J."/>
            <person name="Ehrlich S.D."/>
            <person name="Sorokin A."/>
        </authorList>
    </citation>
    <scope>NUCLEOTIDE SEQUENCE [LARGE SCALE GENOMIC DNA]</scope>
    <source>
        <strain>DSM 22905 / CIP 110041 / 391-98 / NVH 391-98</strain>
    </source>
</reference>
<keyword id="KW-0560">Oxidoreductase</keyword>
<keyword id="KW-0663">Pyridoxal phosphate</keyword>
<feature type="chain" id="PRO_1000083227" description="Probable glycine dehydrogenase (decarboxylating) subunit 2">
    <location>
        <begin position="1"/>
        <end position="491"/>
    </location>
</feature>
<feature type="modified residue" description="N6-(pyridoxal phosphate)lysine" evidence="1">
    <location>
        <position position="273"/>
    </location>
</feature>
<organism>
    <name type="scientific">Bacillus cytotoxicus (strain DSM 22905 / CIP 110041 / 391-98 / NVH 391-98)</name>
    <dbReference type="NCBI Taxonomy" id="315749"/>
    <lineage>
        <taxon>Bacteria</taxon>
        <taxon>Bacillati</taxon>
        <taxon>Bacillota</taxon>
        <taxon>Bacilli</taxon>
        <taxon>Bacillales</taxon>
        <taxon>Bacillaceae</taxon>
        <taxon>Bacillus</taxon>
        <taxon>Bacillus cereus group</taxon>
    </lineage>
</organism>
<accession>A7GSN6</accession>
<evidence type="ECO:0000255" key="1">
    <source>
        <dbReference type="HAMAP-Rule" id="MF_00713"/>
    </source>
</evidence>
<proteinExistence type="inferred from homology"/>